<gene>
    <name evidence="1" type="primary">M</name>
</gene>
<sequence>MSLLTEVETPIRNEWGCRCNDSSDPLVAAASIIGILHLILWILDRLFFKCIYRRFKYGLKRGPSTEGVPESMREEYRQKQQSAVDVDDGHFVNIVLE</sequence>
<accession>Q67203</accession>
<feature type="chain" id="PRO_0000326376" description="Matrix protein 2">
    <location>
        <begin position="1"/>
        <end position="97"/>
    </location>
</feature>
<feature type="topological domain" description="Virion surface" evidence="1">
    <location>
        <begin position="1"/>
        <end position="22"/>
    </location>
</feature>
<feature type="transmembrane region" description="Helical; Signal-anchor for type III membrane protein" evidence="1">
    <location>
        <begin position="23"/>
        <end position="43"/>
    </location>
</feature>
<feature type="topological domain" description="Intravirion" evidence="1">
    <location>
        <begin position="44"/>
        <end position="97"/>
    </location>
</feature>
<feature type="site" description="Essential for channel activity, possibly by being protonated during channel activation, and by forming the channel gate and the selective filter" evidence="1">
    <location>
        <position position="37"/>
    </location>
</feature>
<feature type="site" description="Seems to be involved in pH gating" evidence="1">
    <location>
        <position position="41"/>
    </location>
</feature>
<feature type="modified residue" description="Phosphoserine; by host" evidence="1">
    <location>
        <position position="64"/>
    </location>
</feature>
<feature type="modified residue" description="Phosphoserine; by host" evidence="1">
    <location>
        <position position="82"/>
    </location>
</feature>
<feature type="lipid moiety-binding region" description="S-palmitoyl cysteine; by host" evidence="1">
    <location>
        <position position="50"/>
    </location>
</feature>
<feature type="glycosylation site" description="N-linked (GlcNAc...) asparagine; by host" evidence="1">
    <location>
        <position position="20"/>
    </location>
</feature>
<feature type="disulfide bond" description="Interchain (with C-17)" evidence="1">
    <location>
        <position position="17"/>
    </location>
</feature>
<feature type="disulfide bond" description="Interchain (with C-19)" evidence="1">
    <location>
        <position position="19"/>
    </location>
</feature>
<proteinExistence type="inferred from homology"/>
<protein>
    <recommendedName>
        <fullName evidence="1">Matrix protein 2</fullName>
    </recommendedName>
    <alternativeName>
        <fullName evidence="1">Proton channel protein M2</fullName>
    </alternativeName>
</protein>
<keyword id="KW-0025">Alternative splicing</keyword>
<keyword id="KW-1015">Disulfide bond</keyword>
<keyword id="KW-0325">Glycoprotein</keyword>
<keyword id="KW-1032">Host cell membrane</keyword>
<keyword id="KW-1043">Host membrane</keyword>
<keyword id="KW-0945">Host-virus interaction</keyword>
<keyword id="KW-0375">Hydrogen ion transport</keyword>
<keyword id="KW-1083">Inhibition of host autophagy by virus</keyword>
<keyword id="KW-0407">Ion channel</keyword>
<keyword id="KW-0406">Ion transport</keyword>
<keyword id="KW-0449">Lipoprotein</keyword>
<keyword id="KW-0472">Membrane</keyword>
<keyword id="KW-0564">Palmitate</keyword>
<keyword id="KW-0597">Phosphoprotein</keyword>
<keyword id="KW-0735">Signal-anchor</keyword>
<keyword id="KW-0812">Transmembrane</keyword>
<keyword id="KW-1133">Transmembrane helix</keyword>
<keyword id="KW-0813">Transport</keyword>
<keyword id="KW-1182">Viral ion channel</keyword>
<keyword id="KW-0946">Virion</keyword>
<organism>
    <name type="scientific">Influenza A virus (strain A/Swine/Ontario/2/1981 H1N1)</name>
    <dbReference type="NCBI Taxonomy" id="384501"/>
    <lineage>
        <taxon>Viruses</taxon>
        <taxon>Riboviria</taxon>
        <taxon>Orthornavirae</taxon>
        <taxon>Negarnaviricota</taxon>
        <taxon>Polyploviricotina</taxon>
        <taxon>Insthoviricetes</taxon>
        <taxon>Articulavirales</taxon>
        <taxon>Orthomyxoviridae</taxon>
        <taxon>Alphainfluenzavirus</taxon>
        <taxon>Alphainfluenzavirus influenzae</taxon>
        <taxon>Influenza A virus</taxon>
    </lineage>
</organism>
<dbReference type="EMBL" id="M63520">
    <property type="protein sequence ID" value="AAA43337.1"/>
    <property type="molecule type" value="Genomic_RNA"/>
</dbReference>
<dbReference type="SMR" id="Q67203"/>
<dbReference type="GlyCosmos" id="Q67203">
    <property type="glycosylation" value="1 site, No reported glycans"/>
</dbReference>
<dbReference type="GO" id="GO:0020002">
    <property type="term" value="C:host cell plasma membrane"/>
    <property type="evidence" value="ECO:0007669"/>
    <property type="project" value="UniProtKB-SubCell"/>
</dbReference>
<dbReference type="GO" id="GO:0016020">
    <property type="term" value="C:membrane"/>
    <property type="evidence" value="ECO:0007669"/>
    <property type="project" value="UniProtKB-UniRule"/>
</dbReference>
<dbReference type="GO" id="GO:0055036">
    <property type="term" value="C:virion membrane"/>
    <property type="evidence" value="ECO:0007669"/>
    <property type="project" value="UniProtKB-SubCell"/>
</dbReference>
<dbReference type="GO" id="GO:0005216">
    <property type="term" value="F:monoatomic ion channel activity"/>
    <property type="evidence" value="ECO:0007669"/>
    <property type="project" value="UniProtKB-UniRule"/>
</dbReference>
<dbReference type="GO" id="GO:0015078">
    <property type="term" value="F:proton transmembrane transporter activity"/>
    <property type="evidence" value="ECO:0007669"/>
    <property type="project" value="UniProtKB-UniRule"/>
</dbReference>
<dbReference type="GO" id="GO:0051259">
    <property type="term" value="P:protein complex oligomerization"/>
    <property type="evidence" value="ECO:0007669"/>
    <property type="project" value="UniProtKB-UniRule"/>
</dbReference>
<dbReference type="GO" id="GO:0044694">
    <property type="term" value="P:symbiont genome entry into host cell via pore formation in plasma membrane"/>
    <property type="evidence" value="ECO:0007669"/>
    <property type="project" value="UniProtKB-UniRule"/>
</dbReference>
<dbReference type="GO" id="GO:0140321">
    <property type="term" value="P:symbiont-mediated suppression of host autophagy"/>
    <property type="evidence" value="ECO:0007669"/>
    <property type="project" value="UniProtKB-KW"/>
</dbReference>
<dbReference type="Gene3D" id="6.10.250.1640">
    <property type="match status" value="1"/>
</dbReference>
<dbReference type="HAMAP" id="MF_04069">
    <property type="entry name" value="INFV_M2"/>
    <property type="match status" value="1"/>
</dbReference>
<dbReference type="InterPro" id="IPR002089">
    <property type="entry name" value="Flu_M2"/>
</dbReference>
<dbReference type="Pfam" id="PF00599">
    <property type="entry name" value="Flu_M2"/>
    <property type="match status" value="1"/>
</dbReference>
<organismHost>
    <name type="scientific">Aves</name>
    <dbReference type="NCBI Taxonomy" id="8782"/>
</organismHost>
<organismHost>
    <name type="scientific">Homo sapiens</name>
    <name type="common">Human</name>
    <dbReference type="NCBI Taxonomy" id="9606"/>
</organismHost>
<organismHost>
    <name type="scientific">Sus scrofa</name>
    <name type="common">Pig</name>
    <dbReference type="NCBI Taxonomy" id="9823"/>
</organismHost>
<name>M2_I81A4</name>
<evidence type="ECO:0000255" key="1">
    <source>
        <dbReference type="HAMAP-Rule" id="MF_04069"/>
    </source>
</evidence>
<reference key="1">
    <citation type="journal article" date="1991" name="J. Virol.">
        <title>Evolutionary analysis of the influenza A virus M gene with comparison of the M1 and M2 proteins.</title>
        <authorList>
            <person name="Ito T."/>
            <person name="Gorman O.T."/>
            <person name="Kawaoka Y."/>
            <person name="Bean W.J."/>
            <person name="Webster R.G."/>
        </authorList>
    </citation>
    <scope>NUCLEOTIDE SEQUENCE [GENOMIC RNA]</scope>
</reference>
<comment type="function">
    <text evidence="1">Forms a proton-selective ion channel that is necessary for the efficient release of the viral genome during virus entry. After attaching to the cell surface, the virion enters the cell by endocytosis. Acidification of the endosome triggers M2 ion channel activity. The influx of protons into virion interior is believed to disrupt interactions between the viral ribonucleoprotein (RNP), matrix protein 1 (M1), and lipid bilayers, thereby freeing the viral genome from interaction with viral proteins and enabling RNA segments to migrate to the host cell nucleus, where influenza virus RNA transcription and replication occur. Also plays a role in viral proteins secretory pathway. Elevates the intravesicular pH of normally acidic compartments, such as trans-Golgi network, preventing newly formed hemagglutinin from premature switching to the fusion-active conformation.</text>
</comment>
<comment type="activity regulation">
    <text>The M2 protein from most influenza A strains is inhibited by amantadine and rimantadine, resulting in viral uncoating incapacity. Emergence of amantadine-resistant variants is usually rapid.</text>
</comment>
<comment type="subunit">
    <text evidence="1">Homotetramer; composed of two disulfide-linked dimers held together by non-covalent interactions. May interact with matrix protein 1.</text>
</comment>
<comment type="subcellular location">
    <subcellularLocation>
        <location evidence="1">Virion membrane</location>
    </subcellularLocation>
    <subcellularLocation>
        <location evidence="1">Host apical cell membrane</location>
        <topology evidence="1">Single-pass type III membrane protein</topology>
    </subcellularLocation>
    <text evidence="1">Abundantly expressed at the apical plasma membrane in infected polarized epithelial cells, in close proximity to budding and assembled virions. Minor component of virions (only 16-20 molecules/virion).</text>
</comment>
<comment type="alternative products">
    <event type="alternative splicing"/>
    <isoform>
        <id>Q67203-1</id>
        <name>M2</name>
        <sequence type="displayed"/>
    </isoform>
    <isoform>
        <id>Q67204-1</id>
        <name>M1</name>
        <sequence type="external"/>
    </isoform>
    <text>Only the first 9 residues are shared by the 2 isoforms.</text>
</comment>
<comment type="domain">
    <text evidence="1">Cytoplasmic tail plays an important role in virion assembly and morphogenesis.</text>
</comment>
<comment type="miscellaneous">
    <text evidence="1">When the channel is activated, one or more imidazole moieties of His-37 probably become bi-protonated.</text>
</comment>
<comment type="similarity">
    <text evidence="1">Belongs to the influenza viruses matrix protein M2 family.</text>
</comment>